<evidence type="ECO:0000250" key="1"/>
<evidence type="ECO:0000255" key="2"/>
<evidence type="ECO:0000256" key="3">
    <source>
        <dbReference type="SAM" id="MobiDB-lite"/>
    </source>
</evidence>
<evidence type="ECO:0000269" key="4">
    <source>
    </source>
</evidence>
<evidence type="ECO:0000269" key="5">
    <source>
    </source>
</evidence>
<evidence type="ECO:0000269" key="6">
    <source>
    </source>
</evidence>
<evidence type="ECO:0000305" key="7"/>
<feature type="signal peptide" evidence="2">
    <location>
        <begin position="1"/>
        <end position="32"/>
    </location>
</feature>
<feature type="peptide" id="PRO_0000019843" description="Neuropeptide W-30">
    <location>
        <begin position="33"/>
        <end position="62"/>
    </location>
</feature>
<feature type="peptide" id="PRO_0000019844" description="Neuropeptide W-23">
    <location>
        <begin position="33"/>
        <end position="55"/>
    </location>
</feature>
<feature type="propeptide" id="PRO_0000019845" evidence="2">
    <location>
        <begin position="65"/>
        <end position="165"/>
    </location>
</feature>
<feature type="region of interest" description="Disordered" evidence="3">
    <location>
        <begin position="106"/>
        <end position="165"/>
    </location>
</feature>
<feature type="compositionally biased region" description="Low complexity" evidence="3">
    <location>
        <begin position="113"/>
        <end position="127"/>
    </location>
</feature>
<feature type="glycosylation site" description="O-linked (Xyl...) (chondroitin sulfate) serine" evidence="4 5 6">
    <location>
        <position position="133"/>
    </location>
</feature>
<feature type="sequence variant" id="VAR_050292" description="In dbSNP:rs2286472.">
    <original>D</original>
    <variation>A</variation>
    <location>
        <position position="149"/>
    </location>
</feature>
<gene>
    <name type="primary">NPW</name>
    <name type="synonym">PPL8</name>
    <name type="synonym">PPNPW</name>
</gene>
<keyword id="KW-0165">Cleavage on pair of basic residues</keyword>
<keyword id="KW-0325">Glycoprotein</keyword>
<keyword id="KW-0527">Neuropeptide</keyword>
<keyword id="KW-0654">Proteoglycan</keyword>
<keyword id="KW-1267">Proteomics identification</keyword>
<keyword id="KW-1185">Reference proteome</keyword>
<keyword id="KW-0964">Secreted</keyword>
<keyword id="KW-0732">Signal</keyword>
<reference key="1">
    <citation type="journal article" date="2002" name="J. Biol. Chem.">
        <title>Identification of neuropeptide W as the endogenous ligand for orphan G-protein-coupled receptors GPR7 and GPR8.</title>
        <authorList>
            <person name="Shimomura Y."/>
            <person name="Harada M."/>
            <person name="Goto M."/>
            <person name="Sugo T."/>
            <person name="Matsumoto Y."/>
            <person name="Abe M."/>
            <person name="Watanabe T."/>
            <person name="Asami T."/>
            <person name="Kitada C."/>
            <person name="Mori M."/>
            <person name="Onda H."/>
            <person name="Fujino M."/>
        </authorList>
    </citation>
    <scope>NUCLEOTIDE SEQUENCE [MRNA]</scope>
    <scope>CHARACTERIZATION</scope>
    <scope>SYNTHESIS OF NPW23 AND NPW30</scope>
</reference>
<reference key="2">
    <citation type="journal article" date="2003" name="J. Biol. Chem.">
        <title>Identification of natural ligands for the orphan G protein-coupled receptors GPR7 and GPR8.</title>
        <authorList>
            <person name="Brezillon S."/>
            <person name="Lannoy V."/>
            <person name="Franssen J.-D."/>
            <person name="Le Poul E."/>
            <person name="Dupriez V."/>
            <person name="Lucchetti J."/>
            <person name="Detheux M."/>
            <person name="Parmentier M."/>
        </authorList>
    </citation>
    <scope>CHARACTERIZATION</scope>
</reference>
<reference key="3">
    <citation type="journal article" date="2015" name="Mol. Cell. Proteomics">
        <title>Identification of chondroitin sulfate linkage region glycopeptides reveals prohormones as a novel class of proteoglycans.</title>
        <authorList>
            <person name="Noborn F."/>
            <person name="Gomez Toledo A."/>
            <person name="Sihlbom C."/>
            <person name="Lengqvist J."/>
            <person name="Fries E."/>
            <person name="Kjellen L."/>
            <person name="Nilsson J."/>
            <person name="Larson G."/>
        </authorList>
    </citation>
    <scope>SUBCELLULAR LOCATION</scope>
    <scope>TISSUE SPECIFICITY</scope>
    <scope>GLYCOSYLATION AT SER-133</scope>
</reference>
<reference key="4">
    <citation type="journal article" date="2022" name="J. Proteins Proteom.">
        <title>Mass spectrometric analysis of chondroitin sulfate-linked peptides.</title>
        <authorList>
            <person name="Ramarajan M.G."/>
            <person name="Saraswat M."/>
            <person name="Budhraja R."/>
            <person name="Garapati K."/>
            <person name="Raymond K."/>
            <person name="Pandey A."/>
        </authorList>
    </citation>
    <scope>SUBCELLULAR LOCATION</scope>
    <scope>TISSUE SPECIFICITY</scope>
    <scope>GLYCOSYLATION AT SER-133</scope>
</reference>
<reference key="5">
    <citation type="journal article" date="2023" name="Mol. Cell. Proteomics">
        <title>Mapping the Human Chondroitin Sulfate Glycoproteome Reveals an Unexpected Correlation Between Glycan Sulfation and Attachment Site Characteristics.</title>
        <authorList>
            <person name="Noborn F."/>
            <person name="Nilsson J."/>
            <person name="Sihlbom C."/>
            <person name="Nikpour M."/>
            <person name="Kjellen L."/>
            <person name="Larson G."/>
        </authorList>
    </citation>
    <scope>SUBCELLULAR LOCATION</scope>
    <scope>TISSUE SPECIFICITY</scope>
    <scope>GLYCOSYLATION AT SER-133</scope>
</reference>
<name>NPW_HUMAN</name>
<protein>
    <recommendedName>
        <fullName>Neuropeptide W</fullName>
    </recommendedName>
    <alternativeName>
        <fullName>Preproprotein L8</fullName>
        <shortName>hPPL8</shortName>
    </alternativeName>
    <component>
        <recommendedName>
            <fullName>Neuropeptide W-23</fullName>
            <shortName>NPW23</shortName>
            <shortName>hL8</shortName>
        </recommendedName>
    </component>
    <component>
        <recommendedName>
            <fullName>Neuropeptide W-30</fullName>
            <shortName>NPW30</shortName>
            <shortName>hL8C</shortName>
        </recommendedName>
    </component>
</protein>
<comment type="function">
    <text evidence="1">Plays a regulatory role in the organization of neuroendocrine signals accessing the anterior pituitary gland. Stimulates water drinking and food intake. May play a role in the hypothalamic response to stress (By similarity). NPW23 activates GPR7 and GPR8 more efficiently than NPW30.</text>
</comment>
<comment type="subcellular location">
    <subcellularLocation>
        <location evidence="4 5 6">Secreted</location>
    </subcellularLocation>
</comment>
<comment type="tissue specificity">
    <text evidence="4 5 6">Detected in cerebrospinal fluid and urine (at protein level) (PubMed:25326458, PubMed:36213313, PubMed:37453717). Detected at high levels in the substantia nigra, fetal kidney and trachea; at lower levels in testis, uterus, ovary and placenta. Not detectable in many regions of the central nervous system. Also detected at high levels in lymphoblastic leukemia and colorectal adenocarcinoma.</text>
</comment>
<comment type="similarity">
    <text evidence="7">Belongs to the neuropeptide B/W family.</text>
</comment>
<comment type="sequence caution" evidence="7">
    <conflict type="erroneous initiation">
        <sequence resource="EMBL-CDS" id="BAC07172"/>
    </conflict>
</comment>
<accession>Q8N729</accession>
<sequence>MAWRPGERGAPASRPRLALLLLLLLLPLPSGAWYKHVASPRYHTVGRAAGLLMGLRRSPYLWRRALRAAAGPLARDTLSPEPAAREAPLLLPSWVQELWETRRRSSQAGIPVRAPRSPRAPEPALEPESLDFSGAGQRLRRDVSRPAVDPAANRLGLPCLAPGPF</sequence>
<proteinExistence type="evidence at protein level"/>
<organism>
    <name type="scientific">Homo sapiens</name>
    <name type="common">Human</name>
    <dbReference type="NCBI Taxonomy" id="9606"/>
    <lineage>
        <taxon>Eukaryota</taxon>
        <taxon>Metazoa</taxon>
        <taxon>Chordata</taxon>
        <taxon>Craniata</taxon>
        <taxon>Vertebrata</taxon>
        <taxon>Euteleostomi</taxon>
        <taxon>Mammalia</taxon>
        <taxon>Eutheria</taxon>
        <taxon>Euarchontoglires</taxon>
        <taxon>Primates</taxon>
        <taxon>Haplorrhini</taxon>
        <taxon>Catarrhini</taxon>
        <taxon>Hominidae</taxon>
        <taxon>Homo</taxon>
    </lineage>
</organism>
<dbReference type="EMBL" id="AB084276">
    <property type="protein sequence ID" value="BAC07172.1"/>
    <property type="status" value="ALT_INIT"/>
    <property type="molecule type" value="mRNA"/>
</dbReference>
<dbReference type="CCDS" id="CCDS42102.1"/>
<dbReference type="RefSeq" id="NP_001092926.2">
    <property type="nucleotide sequence ID" value="NM_001099456.3"/>
</dbReference>
<dbReference type="BioGRID" id="129692">
    <property type="interactions" value="43"/>
</dbReference>
<dbReference type="FunCoup" id="Q8N729">
    <property type="interactions" value="441"/>
</dbReference>
<dbReference type="IntAct" id="Q8N729">
    <property type="interactions" value="17"/>
</dbReference>
<dbReference type="STRING" id="9606.ENSP00000456974"/>
<dbReference type="GlyGen" id="Q8N729">
    <property type="glycosylation" value="1 site"/>
</dbReference>
<dbReference type="iPTMnet" id="Q8N729"/>
<dbReference type="PhosphoSitePlus" id="Q8N729"/>
<dbReference type="BioMuta" id="NPW"/>
<dbReference type="MassIVE" id="Q8N729"/>
<dbReference type="PaxDb" id="9606-ENSP00000330070"/>
<dbReference type="PeptideAtlas" id="Q8N729"/>
<dbReference type="ProteomicsDB" id="72259"/>
<dbReference type="Antibodypedia" id="54421">
    <property type="antibodies" value="105 antibodies from 16 providers"/>
</dbReference>
<dbReference type="DNASU" id="283869"/>
<dbReference type="Ensembl" id="ENST00000566435.4">
    <property type="protein sequence ID" value="ENSP00000456974.3"/>
    <property type="gene ID" value="ENSG00000183971.10"/>
</dbReference>
<dbReference type="Ensembl" id="ENST00000709296.1">
    <property type="protein sequence ID" value="ENSP00000517604.1"/>
    <property type="gene ID" value="ENSG00000291946.1"/>
</dbReference>
<dbReference type="GeneID" id="283869"/>
<dbReference type="KEGG" id="hsa:283869"/>
<dbReference type="MANE-Select" id="ENST00000566435.4">
    <property type="protein sequence ID" value="ENSP00000456974.3"/>
    <property type="RefSeq nucleotide sequence ID" value="NM_001099456.3"/>
    <property type="RefSeq protein sequence ID" value="NP_001092926.2"/>
</dbReference>
<dbReference type="UCSC" id="uc059pez.1">
    <property type="organism name" value="human"/>
</dbReference>
<dbReference type="AGR" id="HGNC:30509"/>
<dbReference type="CTD" id="283869"/>
<dbReference type="DisGeNET" id="283869"/>
<dbReference type="GeneCards" id="NPW"/>
<dbReference type="HGNC" id="HGNC:30509">
    <property type="gene designation" value="NPW"/>
</dbReference>
<dbReference type="HPA" id="ENSG00000183971">
    <property type="expression patterns" value="Tissue enhanced (liver)"/>
</dbReference>
<dbReference type="MIM" id="607997">
    <property type="type" value="gene"/>
</dbReference>
<dbReference type="neXtProt" id="NX_Q8N729"/>
<dbReference type="OpenTargets" id="ENSG00000183971"/>
<dbReference type="PharmGKB" id="PA142671248"/>
<dbReference type="VEuPathDB" id="HostDB:ENSG00000183971"/>
<dbReference type="eggNOG" id="ENOG502SW0V">
    <property type="taxonomic scope" value="Eukaryota"/>
</dbReference>
<dbReference type="GeneTree" id="ENSGT00940000158204"/>
<dbReference type="HOGENOM" id="CLU_121719_0_0_1"/>
<dbReference type="InParanoid" id="Q8N729"/>
<dbReference type="OMA" id="RAQPWFL"/>
<dbReference type="OrthoDB" id="9942334at2759"/>
<dbReference type="PAN-GO" id="Q8N729">
    <property type="GO annotations" value="3 GO annotations based on evolutionary models"/>
</dbReference>
<dbReference type="PhylomeDB" id="Q8N729"/>
<dbReference type="TreeFam" id="TF333179"/>
<dbReference type="PathwayCommons" id="Q8N729"/>
<dbReference type="Reactome" id="R-HSA-375276">
    <property type="pathway name" value="Peptide ligand-binding receptors"/>
</dbReference>
<dbReference type="Reactome" id="R-HSA-418594">
    <property type="pathway name" value="G alpha (i) signalling events"/>
</dbReference>
<dbReference type="SignaLink" id="Q8N729"/>
<dbReference type="BioGRID-ORCS" id="283869">
    <property type="hits" value="15 hits in 1141 CRISPR screens"/>
</dbReference>
<dbReference type="ChiTaRS" id="NPW">
    <property type="organism name" value="human"/>
</dbReference>
<dbReference type="GeneWiki" id="NPW"/>
<dbReference type="GenomeRNAi" id="283869"/>
<dbReference type="Pharos" id="Q8N729">
    <property type="development level" value="Tbio"/>
</dbReference>
<dbReference type="PRO" id="PR:Q8N729"/>
<dbReference type="Proteomes" id="UP000005640">
    <property type="component" value="Chromosome 16"/>
</dbReference>
<dbReference type="RNAct" id="Q8N729">
    <property type="molecule type" value="protein"/>
</dbReference>
<dbReference type="Bgee" id="ENSG00000183971">
    <property type="expression patterns" value="Expressed in male germ line stem cell (sensu Vertebrata) in testis and 91 other cell types or tissues"/>
</dbReference>
<dbReference type="ExpressionAtlas" id="Q8N729">
    <property type="expression patterns" value="baseline and differential"/>
</dbReference>
<dbReference type="GO" id="GO:0005576">
    <property type="term" value="C:extracellular region"/>
    <property type="evidence" value="ECO:0000304"/>
    <property type="project" value="Reactome"/>
</dbReference>
<dbReference type="GO" id="GO:0001664">
    <property type="term" value="F:G protein-coupled receptor binding"/>
    <property type="evidence" value="ECO:0000318"/>
    <property type="project" value="GO_Central"/>
</dbReference>
<dbReference type="GO" id="GO:0007631">
    <property type="term" value="P:feeding behavior"/>
    <property type="evidence" value="ECO:0000314"/>
    <property type="project" value="HGNC-UCL"/>
</dbReference>
<dbReference type="GO" id="GO:0007186">
    <property type="term" value="P:G protein-coupled receptor signaling pathway"/>
    <property type="evidence" value="ECO:0000314"/>
    <property type="project" value="HGNC-UCL"/>
</dbReference>
<dbReference type="GO" id="GO:0007218">
    <property type="term" value="P:neuropeptide signaling pathway"/>
    <property type="evidence" value="ECO:0007669"/>
    <property type="project" value="UniProtKB-KW"/>
</dbReference>
<dbReference type="InterPro" id="IPR013297">
    <property type="entry name" value="Neuropept_BW_pre"/>
</dbReference>
<dbReference type="InterPro" id="IPR013299">
    <property type="entry name" value="Neuropept_W_pre"/>
</dbReference>
<dbReference type="PANTHER" id="PTHR28553">
    <property type="entry name" value="NEUROPEPTIDE B"/>
    <property type="match status" value="1"/>
</dbReference>
<dbReference type="PANTHER" id="PTHR28553:SF2">
    <property type="entry name" value="NEUROPEPTIDE W"/>
    <property type="match status" value="1"/>
</dbReference>
<dbReference type="Pfam" id="PF15180">
    <property type="entry name" value="NPBW"/>
    <property type="match status" value="1"/>
</dbReference>
<dbReference type="PRINTS" id="PR01888">
    <property type="entry name" value="NROPEPTIDEBW"/>
</dbReference>
<dbReference type="PRINTS" id="PR01890">
    <property type="entry name" value="PPNRPEPTIDEW"/>
</dbReference>